<gene>
    <name evidence="1" type="primary">mnmA</name>
    <name type="ordered locus">AZOSEA05220</name>
    <name type="ORF">ebA986</name>
</gene>
<reference key="1">
    <citation type="journal article" date="2005" name="Arch. Microbiol.">
        <title>The genome sequence of an anaerobic aromatic-degrading denitrifying bacterium, strain EbN1.</title>
        <authorList>
            <person name="Rabus R."/>
            <person name="Kube M."/>
            <person name="Heider J."/>
            <person name="Beck A."/>
            <person name="Heitmann K."/>
            <person name="Widdel F."/>
            <person name="Reinhardt R."/>
        </authorList>
    </citation>
    <scope>NUCLEOTIDE SEQUENCE [LARGE SCALE GENOMIC DNA]</scope>
    <source>
        <strain>DSM 19018 / LMG 30748 / EbN1</strain>
    </source>
</reference>
<protein>
    <recommendedName>
        <fullName evidence="1">tRNA-specific 2-thiouridylase MnmA</fullName>
        <ecNumber evidence="1">2.8.1.13</ecNumber>
    </recommendedName>
</protein>
<feature type="chain" id="PRO_0000349518" description="tRNA-specific 2-thiouridylase MnmA">
    <location>
        <begin position="1"/>
        <end position="374"/>
    </location>
</feature>
<feature type="region of interest" description="Interaction with target base in tRNA" evidence="1">
    <location>
        <begin position="101"/>
        <end position="103"/>
    </location>
</feature>
<feature type="region of interest" description="Interaction with tRNA" evidence="1">
    <location>
        <begin position="156"/>
        <end position="158"/>
    </location>
</feature>
<feature type="region of interest" description="Interaction with tRNA" evidence="1">
    <location>
        <begin position="324"/>
        <end position="325"/>
    </location>
</feature>
<feature type="active site" description="Nucleophile" evidence="1">
    <location>
        <position position="106"/>
    </location>
</feature>
<feature type="active site" description="Cysteine persulfide intermediate" evidence="1">
    <location>
        <position position="206"/>
    </location>
</feature>
<feature type="binding site" evidence="1">
    <location>
        <begin position="15"/>
        <end position="22"/>
    </location>
    <ligand>
        <name>ATP</name>
        <dbReference type="ChEBI" id="CHEBI:30616"/>
    </ligand>
</feature>
<feature type="binding site" evidence="1">
    <location>
        <position position="41"/>
    </location>
    <ligand>
        <name>ATP</name>
        <dbReference type="ChEBI" id="CHEBI:30616"/>
    </ligand>
</feature>
<feature type="binding site" evidence="1">
    <location>
        <position position="130"/>
    </location>
    <ligand>
        <name>ATP</name>
        <dbReference type="ChEBI" id="CHEBI:30616"/>
    </ligand>
</feature>
<feature type="site" description="Interaction with tRNA" evidence="1">
    <location>
        <position position="131"/>
    </location>
</feature>
<feature type="site" description="Interaction with tRNA" evidence="1">
    <location>
        <position position="357"/>
    </location>
</feature>
<feature type="disulfide bond" description="Alternate" evidence="1">
    <location>
        <begin position="106"/>
        <end position="206"/>
    </location>
</feature>
<evidence type="ECO:0000255" key="1">
    <source>
        <dbReference type="HAMAP-Rule" id="MF_00144"/>
    </source>
</evidence>
<accession>Q5P7R7</accession>
<proteinExistence type="inferred from homology"/>
<keyword id="KW-0067">ATP-binding</keyword>
<keyword id="KW-0963">Cytoplasm</keyword>
<keyword id="KW-1015">Disulfide bond</keyword>
<keyword id="KW-0547">Nucleotide-binding</keyword>
<keyword id="KW-1185">Reference proteome</keyword>
<keyword id="KW-0694">RNA-binding</keyword>
<keyword id="KW-0808">Transferase</keyword>
<keyword id="KW-0819">tRNA processing</keyword>
<keyword id="KW-0820">tRNA-binding</keyword>
<comment type="function">
    <text evidence="1">Catalyzes the 2-thiolation of uridine at the wobble position (U34) of tRNA, leading to the formation of s(2)U34.</text>
</comment>
<comment type="catalytic activity">
    <reaction evidence="1">
        <text>S-sulfanyl-L-cysteinyl-[protein] + uridine(34) in tRNA + AH2 + ATP = 2-thiouridine(34) in tRNA + L-cysteinyl-[protein] + A + AMP + diphosphate + H(+)</text>
        <dbReference type="Rhea" id="RHEA:47032"/>
        <dbReference type="Rhea" id="RHEA-COMP:10131"/>
        <dbReference type="Rhea" id="RHEA-COMP:11726"/>
        <dbReference type="Rhea" id="RHEA-COMP:11727"/>
        <dbReference type="Rhea" id="RHEA-COMP:11728"/>
        <dbReference type="ChEBI" id="CHEBI:13193"/>
        <dbReference type="ChEBI" id="CHEBI:15378"/>
        <dbReference type="ChEBI" id="CHEBI:17499"/>
        <dbReference type="ChEBI" id="CHEBI:29950"/>
        <dbReference type="ChEBI" id="CHEBI:30616"/>
        <dbReference type="ChEBI" id="CHEBI:33019"/>
        <dbReference type="ChEBI" id="CHEBI:61963"/>
        <dbReference type="ChEBI" id="CHEBI:65315"/>
        <dbReference type="ChEBI" id="CHEBI:87170"/>
        <dbReference type="ChEBI" id="CHEBI:456215"/>
        <dbReference type="EC" id="2.8.1.13"/>
    </reaction>
</comment>
<comment type="subcellular location">
    <subcellularLocation>
        <location evidence="1">Cytoplasm</location>
    </subcellularLocation>
</comment>
<comment type="similarity">
    <text evidence="1">Belongs to the MnmA/TRMU family.</text>
</comment>
<organism>
    <name type="scientific">Aromatoleum aromaticum (strain DSM 19018 / LMG 30748 / EbN1)</name>
    <name type="common">Azoarcus sp. (strain EbN1)</name>
    <dbReference type="NCBI Taxonomy" id="76114"/>
    <lineage>
        <taxon>Bacteria</taxon>
        <taxon>Pseudomonadati</taxon>
        <taxon>Pseudomonadota</taxon>
        <taxon>Betaproteobacteria</taxon>
        <taxon>Rhodocyclales</taxon>
        <taxon>Rhodocyclaceae</taxon>
        <taxon>Aromatoleum</taxon>
    </lineage>
</organism>
<sequence>MSSNTDPNGMKVVVGMSGGVDSSVTALLLKQQGFDVTGLFMKNWEDDDDDEYCSTRQDLVDVASVCDVIGIDLEVVNFSAEYKDRVFADFLREYEAGRTPNPDVLCNSEIKFRCFLDHAMALGADRIATGHYAQVREWANDGRSEYQLLKAEDGTKDQSYFLYRLNQAQLAKTLFPLGALYKRDVRRIAAEAGLHVAEKKDSTGICFIGERPFREFLMRYLPMRPGEIRNLDDGRVIGEHQGLMYHTIGQRKGLHIGGIKGRQDGAGEHDAWYVAGKDVKANVLYAVQGHEHPALLKTRLSATDLHWIAGRDPHTHWVYTAKPRYRTPDMPCEIEALVDGGAEIVFAEPQWALTPGQSVVVYESKVCLGGGVIA</sequence>
<dbReference type="EC" id="2.8.1.13" evidence="1"/>
<dbReference type="EMBL" id="CR555306">
    <property type="protein sequence ID" value="CAI06644.1"/>
    <property type="molecule type" value="Genomic_DNA"/>
</dbReference>
<dbReference type="SMR" id="Q5P7R7"/>
<dbReference type="STRING" id="76114.ebA986"/>
<dbReference type="KEGG" id="eba:ebA986"/>
<dbReference type="eggNOG" id="COG0482">
    <property type="taxonomic scope" value="Bacteria"/>
</dbReference>
<dbReference type="HOGENOM" id="CLU_035188_1_0_4"/>
<dbReference type="Proteomes" id="UP000006552">
    <property type="component" value="Chromosome"/>
</dbReference>
<dbReference type="GO" id="GO:0005737">
    <property type="term" value="C:cytoplasm"/>
    <property type="evidence" value="ECO:0007669"/>
    <property type="project" value="UniProtKB-SubCell"/>
</dbReference>
<dbReference type="GO" id="GO:0005524">
    <property type="term" value="F:ATP binding"/>
    <property type="evidence" value="ECO:0007669"/>
    <property type="project" value="UniProtKB-KW"/>
</dbReference>
<dbReference type="GO" id="GO:0000049">
    <property type="term" value="F:tRNA binding"/>
    <property type="evidence" value="ECO:0007669"/>
    <property type="project" value="UniProtKB-KW"/>
</dbReference>
<dbReference type="GO" id="GO:0103016">
    <property type="term" value="F:tRNA-uridine 2-sulfurtransferase activity"/>
    <property type="evidence" value="ECO:0007669"/>
    <property type="project" value="UniProtKB-EC"/>
</dbReference>
<dbReference type="GO" id="GO:0002143">
    <property type="term" value="P:tRNA wobble position uridine thiolation"/>
    <property type="evidence" value="ECO:0007669"/>
    <property type="project" value="TreeGrafter"/>
</dbReference>
<dbReference type="CDD" id="cd01998">
    <property type="entry name" value="MnmA_TRMU-like"/>
    <property type="match status" value="1"/>
</dbReference>
<dbReference type="FunFam" id="2.30.30.280:FF:000001">
    <property type="entry name" value="tRNA-specific 2-thiouridylase MnmA"/>
    <property type="match status" value="1"/>
</dbReference>
<dbReference type="FunFam" id="2.40.30.10:FF:000023">
    <property type="entry name" value="tRNA-specific 2-thiouridylase MnmA"/>
    <property type="match status" value="1"/>
</dbReference>
<dbReference type="FunFam" id="3.40.50.620:FF:000004">
    <property type="entry name" value="tRNA-specific 2-thiouridylase MnmA"/>
    <property type="match status" value="1"/>
</dbReference>
<dbReference type="Gene3D" id="2.30.30.280">
    <property type="entry name" value="Adenine nucleotide alpha hydrolases-like domains"/>
    <property type="match status" value="1"/>
</dbReference>
<dbReference type="Gene3D" id="3.40.50.620">
    <property type="entry name" value="HUPs"/>
    <property type="match status" value="1"/>
</dbReference>
<dbReference type="Gene3D" id="2.40.30.10">
    <property type="entry name" value="Translation factors"/>
    <property type="match status" value="1"/>
</dbReference>
<dbReference type="HAMAP" id="MF_00144">
    <property type="entry name" value="tRNA_thiouridyl_MnmA"/>
    <property type="match status" value="1"/>
</dbReference>
<dbReference type="InterPro" id="IPR004506">
    <property type="entry name" value="MnmA-like"/>
</dbReference>
<dbReference type="InterPro" id="IPR046885">
    <property type="entry name" value="MnmA-like_C"/>
</dbReference>
<dbReference type="InterPro" id="IPR046884">
    <property type="entry name" value="MnmA-like_central"/>
</dbReference>
<dbReference type="InterPro" id="IPR023382">
    <property type="entry name" value="MnmA-like_central_sf"/>
</dbReference>
<dbReference type="InterPro" id="IPR014729">
    <property type="entry name" value="Rossmann-like_a/b/a_fold"/>
</dbReference>
<dbReference type="NCBIfam" id="NF001138">
    <property type="entry name" value="PRK00143.1"/>
    <property type="match status" value="1"/>
</dbReference>
<dbReference type="NCBIfam" id="TIGR00420">
    <property type="entry name" value="trmU"/>
    <property type="match status" value="1"/>
</dbReference>
<dbReference type="PANTHER" id="PTHR11933:SF5">
    <property type="entry name" value="MITOCHONDRIAL TRNA-SPECIFIC 2-THIOURIDYLASE 1"/>
    <property type="match status" value="1"/>
</dbReference>
<dbReference type="PANTHER" id="PTHR11933">
    <property type="entry name" value="TRNA 5-METHYLAMINOMETHYL-2-THIOURIDYLATE -METHYLTRANSFERASE"/>
    <property type="match status" value="1"/>
</dbReference>
<dbReference type="Pfam" id="PF03054">
    <property type="entry name" value="tRNA_Me_trans"/>
    <property type="match status" value="1"/>
</dbReference>
<dbReference type="Pfam" id="PF20258">
    <property type="entry name" value="tRNA_Me_trans_C"/>
    <property type="match status" value="1"/>
</dbReference>
<dbReference type="Pfam" id="PF20259">
    <property type="entry name" value="tRNA_Me_trans_M"/>
    <property type="match status" value="1"/>
</dbReference>
<dbReference type="SUPFAM" id="SSF52402">
    <property type="entry name" value="Adenine nucleotide alpha hydrolases-like"/>
    <property type="match status" value="1"/>
</dbReference>
<name>MNMA_AROAE</name>